<feature type="chain" id="PRO_0000158183" description="Imidazoleglycerol-phosphate dehydratase">
    <location>
        <begin position="1"/>
        <end position="213"/>
    </location>
</feature>
<name>HIS7_TRIEI</name>
<proteinExistence type="inferred from homology"/>
<evidence type="ECO:0000255" key="1">
    <source>
        <dbReference type="HAMAP-Rule" id="MF_00076"/>
    </source>
</evidence>
<organism>
    <name type="scientific">Trichodesmium erythraeum (strain IMS101)</name>
    <dbReference type="NCBI Taxonomy" id="203124"/>
    <lineage>
        <taxon>Bacteria</taxon>
        <taxon>Bacillati</taxon>
        <taxon>Cyanobacteriota</taxon>
        <taxon>Cyanophyceae</taxon>
        <taxon>Oscillatoriophycideae</taxon>
        <taxon>Oscillatoriales</taxon>
        <taxon>Microcoleaceae</taxon>
        <taxon>Trichodesmium</taxon>
    </lineage>
</organism>
<gene>
    <name evidence="1" type="primary">hisB</name>
    <name type="ordered locus">Tery_2028</name>
</gene>
<comment type="catalytic activity">
    <reaction evidence="1">
        <text>D-erythro-1-(imidazol-4-yl)glycerol 3-phosphate = 3-(imidazol-4-yl)-2-oxopropyl phosphate + H2O</text>
        <dbReference type="Rhea" id="RHEA:11040"/>
        <dbReference type="ChEBI" id="CHEBI:15377"/>
        <dbReference type="ChEBI" id="CHEBI:57766"/>
        <dbReference type="ChEBI" id="CHEBI:58278"/>
        <dbReference type="EC" id="4.2.1.19"/>
    </reaction>
</comment>
<comment type="pathway">
    <text evidence="1">Amino-acid biosynthesis; L-histidine biosynthesis; L-histidine from 5-phospho-alpha-D-ribose 1-diphosphate: step 6/9.</text>
</comment>
<comment type="subcellular location">
    <subcellularLocation>
        <location evidence="1">Cytoplasm</location>
    </subcellularLocation>
</comment>
<comment type="similarity">
    <text evidence="1">Belongs to the imidazoleglycerol-phosphate dehydratase family.</text>
</comment>
<reference key="1">
    <citation type="submission" date="2001-05" db="EMBL/GenBank/DDBJ databases">
        <title>Uncoupling of ammonium repression and ntcA expression in the diazotrophic marine cyanobacterium Trichodesmium strain IMS101.</title>
        <authorList>
            <person name="Wang Q."/>
            <person name="Li H."/>
            <person name="Post A.F."/>
        </authorList>
    </citation>
    <scope>NUCLEOTIDE SEQUENCE [GENOMIC DNA]</scope>
</reference>
<reference key="2">
    <citation type="journal article" date="2015" name="Proc. Natl. Acad. Sci. U.S.A.">
        <title>Trichodesmium genome maintains abundant, widespread noncoding DNA in situ, despite oligotrophic lifestyle.</title>
        <authorList>
            <person name="Walworth N."/>
            <person name="Pfreundt U."/>
            <person name="Nelson W.C."/>
            <person name="Mincer T."/>
            <person name="Heidelberg J.F."/>
            <person name="Fu F."/>
            <person name="Waterbury J.B."/>
            <person name="Glavina del Rio T."/>
            <person name="Goodwin L."/>
            <person name="Kyrpides N.C."/>
            <person name="Land M.L."/>
            <person name="Woyke T."/>
            <person name="Hutchins D.A."/>
            <person name="Hess W.R."/>
            <person name="Webb E.A."/>
        </authorList>
    </citation>
    <scope>NUCLEOTIDE SEQUENCE [LARGE SCALE GENOMIC DNA]</scope>
    <source>
        <strain>IMS101</strain>
    </source>
</reference>
<protein>
    <recommendedName>
        <fullName evidence="1">Imidazoleglycerol-phosphate dehydratase</fullName>
        <shortName evidence="1">IGPD</shortName>
        <ecNumber evidence="1">4.2.1.19</ecNumber>
    </recommendedName>
</protein>
<sequence>MQISDRLSSSTAPILNLPVRRASVKRKTGETDVTVNLNLDGVGNCQANTGIPFLDHMLHQISSHGLIDLDVQAVGDIEIDDHHTNEDVGITLGQALKQALGDRKGIVRFGHFLAPLDEALVEVALDFSGRPHLSYGLEMPTQRVGNYDTQLVREFFVALANNSLMTLHIRQLGGINSHHIIEAGFKAFARSLRMATEIDPRRVGEIPSSKGVL</sequence>
<keyword id="KW-0028">Amino-acid biosynthesis</keyword>
<keyword id="KW-0963">Cytoplasm</keyword>
<keyword id="KW-0368">Histidine biosynthesis</keyword>
<keyword id="KW-0456">Lyase</keyword>
<accession>Q93DQ9</accession>
<accession>Q113Q0</accession>
<dbReference type="EC" id="4.2.1.19" evidence="1"/>
<dbReference type="EMBL" id="AF382392">
    <property type="protein sequence ID" value="AAK97429.1"/>
    <property type="molecule type" value="Genomic_DNA"/>
</dbReference>
<dbReference type="EMBL" id="CP000393">
    <property type="protein sequence ID" value="ABG51274.1"/>
    <property type="molecule type" value="Genomic_DNA"/>
</dbReference>
<dbReference type="RefSeq" id="WP_011611646.1">
    <property type="nucleotide sequence ID" value="NC_008312.1"/>
</dbReference>
<dbReference type="SMR" id="Q93DQ9"/>
<dbReference type="STRING" id="203124.Tery_2028"/>
<dbReference type="KEGG" id="ter:Tery_2028"/>
<dbReference type="eggNOG" id="COG0131">
    <property type="taxonomic scope" value="Bacteria"/>
</dbReference>
<dbReference type="HOGENOM" id="CLU_044308_3_0_3"/>
<dbReference type="OrthoDB" id="9790411at2"/>
<dbReference type="UniPathway" id="UPA00031">
    <property type="reaction ID" value="UER00011"/>
</dbReference>
<dbReference type="GO" id="GO:0005737">
    <property type="term" value="C:cytoplasm"/>
    <property type="evidence" value="ECO:0007669"/>
    <property type="project" value="UniProtKB-SubCell"/>
</dbReference>
<dbReference type="GO" id="GO:0004424">
    <property type="term" value="F:imidazoleglycerol-phosphate dehydratase activity"/>
    <property type="evidence" value="ECO:0007669"/>
    <property type="project" value="UniProtKB-UniRule"/>
</dbReference>
<dbReference type="GO" id="GO:0000105">
    <property type="term" value="P:L-histidine biosynthetic process"/>
    <property type="evidence" value="ECO:0007669"/>
    <property type="project" value="UniProtKB-UniRule"/>
</dbReference>
<dbReference type="CDD" id="cd07914">
    <property type="entry name" value="IGPD"/>
    <property type="match status" value="1"/>
</dbReference>
<dbReference type="FunFam" id="3.30.230.40:FF:000002">
    <property type="entry name" value="Imidazoleglycerol-phosphate dehydratase"/>
    <property type="match status" value="1"/>
</dbReference>
<dbReference type="FunFam" id="3.30.230.40:FF:000003">
    <property type="entry name" value="Imidazoleglycerol-phosphate dehydratase HisB"/>
    <property type="match status" value="1"/>
</dbReference>
<dbReference type="Gene3D" id="3.30.230.40">
    <property type="entry name" value="Imidazole glycerol phosphate dehydratase, domain 1"/>
    <property type="match status" value="2"/>
</dbReference>
<dbReference type="HAMAP" id="MF_00076">
    <property type="entry name" value="HisB"/>
    <property type="match status" value="1"/>
</dbReference>
<dbReference type="InterPro" id="IPR038494">
    <property type="entry name" value="IGPD_sf"/>
</dbReference>
<dbReference type="InterPro" id="IPR000807">
    <property type="entry name" value="ImidazoleglycerolP_deHydtase"/>
</dbReference>
<dbReference type="InterPro" id="IPR020565">
    <property type="entry name" value="ImidazoleglycerP_deHydtase_CS"/>
</dbReference>
<dbReference type="InterPro" id="IPR020568">
    <property type="entry name" value="Ribosomal_Su5_D2-typ_SF"/>
</dbReference>
<dbReference type="NCBIfam" id="NF002108">
    <property type="entry name" value="PRK00951.1-3"/>
    <property type="match status" value="1"/>
</dbReference>
<dbReference type="NCBIfam" id="NF002111">
    <property type="entry name" value="PRK00951.2-1"/>
    <property type="match status" value="1"/>
</dbReference>
<dbReference type="NCBIfam" id="NF002114">
    <property type="entry name" value="PRK00951.2-4"/>
    <property type="match status" value="1"/>
</dbReference>
<dbReference type="PANTHER" id="PTHR23133:SF2">
    <property type="entry name" value="IMIDAZOLEGLYCEROL-PHOSPHATE DEHYDRATASE"/>
    <property type="match status" value="1"/>
</dbReference>
<dbReference type="PANTHER" id="PTHR23133">
    <property type="entry name" value="IMIDAZOLEGLYCEROL-PHOSPHATE DEHYDRATASE HIS7"/>
    <property type="match status" value="1"/>
</dbReference>
<dbReference type="Pfam" id="PF00475">
    <property type="entry name" value="IGPD"/>
    <property type="match status" value="1"/>
</dbReference>
<dbReference type="SUPFAM" id="SSF54211">
    <property type="entry name" value="Ribosomal protein S5 domain 2-like"/>
    <property type="match status" value="2"/>
</dbReference>
<dbReference type="PROSITE" id="PS00954">
    <property type="entry name" value="IGP_DEHYDRATASE_1"/>
    <property type="match status" value="1"/>
</dbReference>
<dbReference type="PROSITE" id="PS00955">
    <property type="entry name" value="IGP_DEHYDRATASE_2"/>
    <property type="match status" value="1"/>
</dbReference>